<comment type="function">
    <text evidence="1">Catalyzes the covalent attachment of the prokaryotic ubiquitin-like protein modifier Pup to the proteasomal substrate proteins, thereby targeting them for proteasomal degradation. This tagging system is termed pupylation. The ligation reaction involves the side-chain carboxylate of the C-terminal glutamate of Pup and the side-chain amino group of a substrate lysine.</text>
</comment>
<comment type="catalytic activity">
    <reaction evidence="1">
        <text>ATP + [prokaryotic ubiquitin-like protein]-L-glutamate + [protein]-L-lysine = ADP + phosphate + N(6)-([prokaryotic ubiquitin-like protein]-gamma-L-glutamyl)-[protein]-L-lysine.</text>
        <dbReference type="EC" id="6.3.1.19"/>
    </reaction>
</comment>
<comment type="pathway">
    <text evidence="1">Protein degradation; proteasomal Pup-dependent pathway.</text>
</comment>
<comment type="pathway">
    <text evidence="1">Protein modification; protein pupylation.</text>
</comment>
<comment type="miscellaneous">
    <text evidence="1">The reaction mechanism probably proceeds via the activation of Pup by phosphorylation of its C-terminal glutamate, which is then subject to nucleophilic attack by the substrate lysine, resulting in an isopeptide bond and the release of phosphate as a good leaving group.</text>
</comment>
<comment type="similarity">
    <text evidence="1">Belongs to the Pup ligase/Pup deamidase family. Pup-conjugating enzyme subfamily.</text>
</comment>
<accession>Q4JVP8</accession>
<gene>
    <name evidence="1" type="primary">pafA</name>
    <name type="ordered locus">jk0945</name>
</gene>
<proteinExistence type="inferred from homology"/>
<evidence type="ECO:0000255" key="1">
    <source>
        <dbReference type="HAMAP-Rule" id="MF_02111"/>
    </source>
</evidence>
<feature type="chain" id="PRO_0000395910" description="Pup--protein ligase">
    <location>
        <begin position="1"/>
        <end position="467"/>
    </location>
</feature>
<feature type="active site" description="Proton acceptor" evidence="1">
    <location>
        <position position="60"/>
    </location>
</feature>
<feature type="binding site" evidence="1">
    <location>
        <position position="12"/>
    </location>
    <ligand>
        <name>Mg(2+)</name>
        <dbReference type="ChEBI" id="CHEBI:18420"/>
    </ligand>
</feature>
<feature type="binding site" evidence="1">
    <location>
        <position position="56"/>
    </location>
    <ligand>
        <name>ATP</name>
        <dbReference type="ChEBI" id="CHEBI:30616"/>
    </ligand>
</feature>
<feature type="binding site" evidence="1">
    <location>
        <position position="58"/>
    </location>
    <ligand>
        <name>Mg(2+)</name>
        <dbReference type="ChEBI" id="CHEBI:18420"/>
    </ligand>
</feature>
<feature type="binding site" evidence="1">
    <location>
        <position position="66"/>
    </location>
    <ligand>
        <name>Mg(2+)</name>
        <dbReference type="ChEBI" id="CHEBI:18420"/>
    </ligand>
</feature>
<feature type="binding site" evidence="1">
    <location>
        <position position="69"/>
    </location>
    <ligand>
        <name>ATP</name>
        <dbReference type="ChEBI" id="CHEBI:30616"/>
    </ligand>
</feature>
<feature type="binding site" evidence="1">
    <location>
        <position position="431"/>
    </location>
    <ligand>
        <name>ATP</name>
        <dbReference type="ChEBI" id="CHEBI:30616"/>
    </ligand>
</feature>
<sequence>MTAIRRRIMGLETEYGIANMQDSSRRLGPDEIARKLFAPVVEKHRSSNIYTENASRLYLDVGAHPEFATAECDSLHQLIAYDRSGDLMFHELADRAEQAVGGKVYLLKNNTDSLGNSYGCHENYLVSRDIPLKGLSKQLLPFLVTRQLICGAGKLAIPYPGAPNENFGPGYTMSQRADHVWEGVSSATTRSRPIINTRDEPHADSSKYRRLHVIVGDSNMSEVTTALKVGSTLLVLEMIEAGVALPDFEMANEIRSIREISRDFTGQVDIALRSGSTATPLEIQRAFYDAACAYLASREDPERGTPNAELTPVVDLWGRVLDCFDTGDFSPVSTEIDWVIKKSLLDRMAAARGLDPIDPRLAQIDLMYHDIHPTRGLFNVLARRGLARTLLAPETIEQAVRQAPPTTRAAVRGRFIAAVRANPELSYTVDWMRVKVNGEGGAEALLADPFANTSEDVDRIIESLESR</sequence>
<keyword id="KW-0067">ATP-binding</keyword>
<keyword id="KW-0436">Ligase</keyword>
<keyword id="KW-0460">Magnesium</keyword>
<keyword id="KW-0479">Metal-binding</keyword>
<keyword id="KW-0547">Nucleotide-binding</keyword>
<keyword id="KW-1185">Reference proteome</keyword>
<keyword id="KW-0833">Ubl conjugation pathway</keyword>
<reference key="1">
    <citation type="journal article" date="2005" name="J. Bacteriol.">
        <title>Complete genome sequence and analysis of the multiresistant nosocomial pathogen Corynebacterium jeikeium K411, a lipid-requiring bacterium of the human skin flora.</title>
        <authorList>
            <person name="Tauch A."/>
            <person name="Kaiser O."/>
            <person name="Hain T."/>
            <person name="Goesmann A."/>
            <person name="Weisshaar B."/>
            <person name="Albersmeier A."/>
            <person name="Bekel T."/>
            <person name="Bischoff N."/>
            <person name="Brune I."/>
            <person name="Chakraborty T."/>
            <person name="Kalinowski J."/>
            <person name="Meyer F."/>
            <person name="Rupp O."/>
            <person name="Schneiker S."/>
            <person name="Viehoever P."/>
            <person name="Puehler A."/>
        </authorList>
    </citation>
    <scope>NUCLEOTIDE SEQUENCE [LARGE SCALE GENOMIC DNA]</scope>
    <source>
        <strain>K411</strain>
    </source>
</reference>
<dbReference type="EC" id="6.3.1.19" evidence="1"/>
<dbReference type="EMBL" id="CR931997">
    <property type="protein sequence ID" value="CAI37109.1"/>
    <property type="molecule type" value="Genomic_DNA"/>
</dbReference>
<dbReference type="RefSeq" id="WP_011273531.1">
    <property type="nucleotide sequence ID" value="NC_007164.1"/>
</dbReference>
<dbReference type="SMR" id="Q4JVP8"/>
<dbReference type="STRING" id="306537.jk0945"/>
<dbReference type="KEGG" id="cjk:jk0945"/>
<dbReference type="PATRIC" id="fig|306537.10.peg.956"/>
<dbReference type="eggNOG" id="COG0638">
    <property type="taxonomic scope" value="Bacteria"/>
</dbReference>
<dbReference type="HOGENOM" id="CLU_040524_0_1_11"/>
<dbReference type="OrthoDB" id="9760627at2"/>
<dbReference type="UniPathway" id="UPA00997"/>
<dbReference type="UniPathway" id="UPA00998"/>
<dbReference type="Proteomes" id="UP000000545">
    <property type="component" value="Chromosome"/>
</dbReference>
<dbReference type="GO" id="GO:0005524">
    <property type="term" value="F:ATP binding"/>
    <property type="evidence" value="ECO:0007669"/>
    <property type="project" value="UniProtKB-UniRule"/>
</dbReference>
<dbReference type="GO" id="GO:0016879">
    <property type="term" value="F:ligase activity, forming carbon-nitrogen bonds"/>
    <property type="evidence" value="ECO:0007669"/>
    <property type="project" value="InterPro"/>
</dbReference>
<dbReference type="GO" id="GO:0000287">
    <property type="term" value="F:magnesium ion binding"/>
    <property type="evidence" value="ECO:0007669"/>
    <property type="project" value="UniProtKB-UniRule"/>
</dbReference>
<dbReference type="GO" id="GO:0019787">
    <property type="term" value="F:ubiquitin-like protein transferase activity"/>
    <property type="evidence" value="ECO:0007669"/>
    <property type="project" value="UniProtKB-UniRule"/>
</dbReference>
<dbReference type="GO" id="GO:0019941">
    <property type="term" value="P:modification-dependent protein catabolic process"/>
    <property type="evidence" value="ECO:0007669"/>
    <property type="project" value="UniProtKB-UniRule"/>
</dbReference>
<dbReference type="GO" id="GO:0010498">
    <property type="term" value="P:proteasomal protein catabolic process"/>
    <property type="evidence" value="ECO:0007669"/>
    <property type="project" value="UniProtKB-UniRule"/>
</dbReference>
<dbReference type="GO" id="GO:0070490">
    <property type="term" value="P:protein pupylation"/>
    <property type="evidence" value="ECO:0007669"/>
    <property type="project" value="UniProtKB-UniRule"/>
</dbReference>
<dbReference type="HAMAP" id="MF_02111">
    <property type="entry name" value="Pup_ligase"/>
    <property type="match status" value="1"/>
</dbReference>
<dbReference type="InterPro" id="IPR022279">
    <property type="entry name" value="Pup_ligase"/>
</dbReference>
<dbReference type="InterPro" id="IPR004347">
    <property type="entry name" value="Pup_ligase/deamidase"/>
</dbReference>
<dbReference type="NCBIfam" id="TIGR03686">
    <property type="entry name" value="pupylate_PafA"/>
    <property type="match status" value="1"/>
</dbReference>
<dbReference type="PANTHER" id="PTHR42307">
    <property type="entry name" value="PUP DEAMIDASE/DEPUPYLASE"/>
    <property type="match status" value="1"/>
</dbReference>
<dbReference type="PANTHER" id="PTHR42307:SF3">
    <property type="entry name" value="PUP--PROTEIN LIGASE"/>
    <property type="match status" value="1"/>
</dbReference>
<dbReference type="Pfam" id="PF03136">
    <property type="entry name" value="Pup_ligase"/>
    <property type="match status" value="1"/>
</dbReference>
<dbReference type="PIRSF" id="PIRSF018077">
    <property type="entry name" value="UCP018077"/>
    <property type="match status" value="1"/>
</dbReference>
<name>PAFA_CORJK</name>
<protein>
    <recommendedName>
        <fullName evidence="1">Pup--protein ligase</fullName>
        <ecNumber evidence="1">6.3.1.19</ecNumber>
    </recommendedName>
    <alternativeName>
        <fullName evidence="1">Proteasome accessory factor A</fullName>
    </alternativeName>
    <alternativeName>
        <fullName evidence="1">Pup-conjugating enzyme</fullName>
    </alternativeName>
</protein>
<organism>
    <name type="scientific">Corynebacterium jeikeium (strain K411)</name>
    <dbReference type="NCBI Taxonomy" id="306537"/>
    <lineage>
        <taxon>Bacteria</taxon>
        <taxon>Bacillati</taxon>
        <taxon>Actinomycetota</taxon>
        <taxon>Actinomycetes</taxon>
        <taxon>Mycobacteriales</taxon>
        <taxon>Corynebacteriaceae</taxon>
        <taxon>Corynebacterium</taxon>
    </lineage>
</organism>